<feature type="chain" id="PRO_1000124652" description="Probable manganese-dependent inorganic pyrophosphatase">
    <location>
        <begin position="1"/>
        <end position="309"/>
    </location>
</feature>
<feature type="binding site" evidence="1">
    <location>
        <position position="9"/>
    </location>
    <ligand>
        <name>Mn(2+)</name>
        <dbReference type="ChEBI" id="CHEBI:29035"/>
        <label>1</label>
    </ligand>
</feature>
<feature type="binding site" evidence="1">
    <location>
        <position position="13"/>
    </location>
    <ligand>
        <name>Mn(2+)</name>
        <dbReference type="ChEBI" id="CHEBI:29035"/>
        <label>1</label>
    </ligand>
</feature>
<feature type="binding site" evidence="1">
    <location>
        <position position="15"/>
    </location>
    <ligand>
        <name>Mn(2+)</name>
        <dbReference type="ChEBI" id="CHEBI:29035"/>
        <label>2</label>
    </ligand>
</feature>
<feature type="binding site" evidence="1">
    <location>
        <position position="75"/>
    </location>
    <ligand>
        <name>Mn(2+)</name>
        <dbReference type="ChEBI" id="CHEBI:29035"/>
        <label>1</label>
    </ligand>
</feature>
<feature type="binding site" evidence="1">
    <location>
        <position position="75"/>
    </location>
    <ligand>
        <name>Mn(2+)</name>
        <dbReference type="ChEBI" id="CHEBI:29035"/>
        <label>2</label>
    </ligand>
</feature>
<feature type="binding site" evidence="1">
    <location>
        <position position="97"/>
    </location>
    <ligand>
        <name>Mn(2+)</name>
        <dbReference type="ChEBI" id="CHEBI:29035"/>
        <label>2</label>
    </ligand>
</feature>
<feature type="binding site" evidence="1">
    <location>
        <position position="149"/>
    </location>
    <ligand>
        <name>Mn(2+)</name>
        <dbReference type="ChEBI" id="CHEBI:29035"/>
        <label>2</label>
    </ligand>
</feature>
<name>PPAC_BACAC</name>
<evidence type="ECO:0000255" key="1">
    <source>
        <dbReference type="HAMAP-Rule" id="MF_00207"/>
    </source>
</evidence>
<proteinExistence type="inferred from homology"/>
<accession>C3LG25</accession>
<comment type="catalytic activity">
    <reaction evidence="1">
        <text>diphosphate + H2O = 2 phosphate + H(+)</text>
        <dbReference type="Rhea" id="RHEA:24576"/>
        <dbReference type="ChEBI" id="CHEBI:15377"/>
        <dbReference type="ChEBI" id="CHEBI:15378"/>
        <dbReference type="ChEBI" id="CHEBI:33019"/>
        <dbReference type="ChEBI" id="CHEBI:43474"/>
        <dbReference type="EC" id="3.6.1.1"/>
    </reaction>
</comment>
<comment type="cofactor">
    <cofactor evidence="1">
        <name>Mn(2+)</name>
        <dbReference type="ChEBI" id="CHEBI:29035"/>
    </cofactor>
    <text evidence="1">Binds 2 manganese ions per subunit.</text>
</comment>
<comment type="subcellular location">
    <subcellularLocation>
        <location evidence="1">Cytoplasm</location>
    </subcellularLocation>
</comment>
<comment type="similarity">
    <text evidence="1">Belongs to the PPase class C family.</text>
</comment>
<sequence>MEKVLVFGHKNPDTDAICSAIAYAELKKELGMNAEPVRLGEISGETQFALDYFKVEGPRFVETVANEVDNVILVDHNERQQSANDIESVRVLEVIDHHRIANFETSDPIYYRCEPVGCTATILNKMYKENGVTIRKEVAGLMLSAIISDSLLFKSPTCTEQDVAAARELAEIAGVDADKYGLEMLKAGADLSGKTMEQLISLDAKEFQMGNAKVEIAQVNAVDTNDVLVHQAELEKVISAVVEEKGLDLFLFVVTDILTNDSVGLAIGKAANIVEKAYNVSLENNTATLKGVVSRKKQIVPVLTEAFQA</sequence>
<protein>
    <recommendedName>
        <fullName evidence="1">Probable manganese-dependent inorganic pyrophosphatase</fullName>
        <ecNumber evidence="1">3.6.1.1</ecNumber>
    </recommendedName>
    <alternativeName>
        <fullName evidence="1">Pyrophosphate phospho-hydrolase</fullName>
        <shortName evidence="1">PPase</shortName>
    </alternativeName>
</protein>
<organism>
    <name type="scientific">Bacillus anthracis (strain CDC 684 / NRRL 3495)</name>
    <dbReference type="NCBI Taxonomy" id="568206"/>
    <lineage>
        <taxon>Bacteria</taxon>
        <taxon>Bacillati</taxon>
        <taxon>Bacillota</taxon>
        <taxon>Bacilli</taxon>
        <taxon>Bacillales</taxon>
        <taxon>Bacillaceae</taxon>
        <taxon>Bacillus</taxon>
        <taxon>Bacillus cereus group</taxon>
    </lineage>
</organism>
<reference key="1">
    <citation type="submission" date="2008-10" db="EMBL/GenBank/DDBJ databases">
        <title>Genome sequence of Bacillus anthracis str. CDC 684.</title>
        <authorList>
            <person name="Dodson R.J."/>
            <person name="Munk A.C."/>
            <person name="Brettin T."/>
            <person name="Bruce D."/>
            <person name="Detter C."/>
            <person name="Tapia R."/>
            <person name="Han C."/>
            <person name="Sutton G."/>
            <person name="Sims D."/>
        </authorList>
    </citation>
    <scope>NUCLEOTIDE SEQUENCE [LARGE SCALE GENOMIC DNA]</scope>
    <source>
        <strain>CDC 684 / NRRL 3495</strain>
    </source>
</reference>
<keyword id="KW-0963">Cytoplasm</keyword>
<keyword id="KW-0378">Hydrolase</keyword>
<keyword id="KW-0464">Manganese</keyword>
<keyword id="KW-0479">Metal-binding</keyword>
<gene>
    <name evidence="1" type="primary">ppaC</name>
    <name type="ordered locus">BAMEG_1770</name>
</gene>
<dbReference type="EC" id="3.6.1.1" evidence="1"/>
<dbReference type="EMBL" id="CP001215">
    <property type="protein sequence ID" value="ACP12392.1"/>
    <property type="molecule type" value="Genomic_DNA"/>
</dbReference>
<dbReference type="RefSeq" id="WP_000416849.1">
    <property type="nucleotide sequence ID" value="NC_012581.1"/>
</dbReference>
<dbReference type="SMR" id="C3LG25"/>
<dbReference type="GeneID" id="45022660"/>
<dbReference type="KEGG" id="bah:BAMEG_1770"/>
<dbReference type="HOGENOM" id="CLU_025243_0_1_9"/>
<dbReference type="GO" id="GO:0005737">
    <property type="term" value="C:cytoplasm"/>
    <property type="evidence" value="ECO:0007669"/>
    <property type="project" value="UniProtKB-SubCell"/>
</dbReference>
<dbReference type="GO" id="GO:0004427">
    <property type="term" value="F:inorganic diphosphate phosphatase activity"/>
    <property type="evidence" value="ECO:0007669"/>
    <property type="project" value="UniProtKB-UniRule"/>
</dbReference>
<dbReference type="GO" id="GO:0030145">
    <property type="term" value="F:manganese ion binding"/>
    <property type="evidence" value="ECO:0007669"/>
    <property type="project" value="UniProtKB-UniRule"/>
</dbReference>
<dbReference type="FunFam" id="3.10.310.20:FF:000001">
    <property type="entry name" value="Probable manganese-dependent inorganic pyrophosphatase"/>
    <property type="match status" value="1"/>
</dbReference>
<dbReference type="FunFam" id="3.90.1640.10:FF:000001">
    <property type="entry name" value="Probable manganese-dependent inorganic pyrophosphatase"/>
    <property type="match status" value="1"/>
</dbReference>
<dbReference type="Gene3D" id="3.10.310.20">
    <property type="entry name" value="DHHA2 domain"/>
    <property type="match status" value="1"/>
</dbReference>
<dbReference type="Gene3D" id="3.90.1640.10">
    <property type="entry name" value="inorganic pyrophosphatase (n-terminal core)"/>
    <property type="match status" value="1"/>
</dbReference>
<dbReference type="HAMAP" id="MF_00207">
    <property type="entry name" value="PPase_C"/>
    <property type="match status" value="1"/>
</dbReference>
<dbReference type="InterPro" id="IPR001667">
    <property type="entry name" value="DDH_dom"/>
</dbReference>
<dbReference type="InterPro" id="IPR038763">
    <property type="entry name" value="DHH_sf"/>
</dbReference>
<dbReference type="InterPro" id="IPR004097">
    <property type="entry name" value="DHHA2"/>
</dbReference>
<dbReference type="InterPro" id="IPR038222">
    <property type="entry name" value="DHHA2_dom_sf"/>
</dbReference>
<dbReference type="InterPro" id="IPR022934">
    <property type="entry name" value="Mn-dep_inorganic_PyrPase"/>
</dbReference>
<dbReference type="NCBIfam" id="NF003877">
    <property type="entry name" value="PRK05427.1"/>
    <property type="match status" value="1"/>
</dbReference>
<dbReference type="PANTHER" id="PTHR12112">
    <property type="entry name" value="BNIP - RELATED"/>
    <property type="match status" value="1"/>
</dbReference>
<dbReference type="PANTHER" id="PTHR12112:SF22">
    <property type="entry name" value="MANGANESE-DEPENDENT INORGANIC PYROPHOSPHATASE-RELATED"/>
    <property type="match status" value="1"/>
</dbReference>
<dbReference type="Pfam" id="PF01368">
    <property type="entry name" value="DHH"/>
    <property type="match status" value="1"/>
</dbReference>
<dbReference type="Pfam" id="PF02833">
    <property type="entry name" value="DHHA2"/>
    <property type="match status" value="1"/>
</dbReference>
<dbReference type="SMART" id="SM01131">
    <property type="entry name" value="DHHA2"/>
    <property type="match status" value="1"/>
</dbReference>
<dbReference type="SUPFAM" id="SSF64182">
    <property type="entry name" value="DHH phosphoesterases"/>
    <property type="match status" value="1"/>
</dbReference>